<keyword id="KW-0413">Isomerase</keyword>
<keyword id="KW-1185">Reference proteome</keyword>
<keyword id="KW-0697">Rotamase</keyword>
<organism>
    <name type="scientific">Rhizopus delemar (strain RA 99-880 / ATCC MYA-4621 / FGSC 9543 / NRRL 43880)</name>
    <name type="common">Mucormycosis agent</name>
    <name type="synonym">Rhizopus arrhizus var. delemar</name>
    <dbReference type="NCBI Taxonomy" id="246409"/>
    <lineage>
        <taxon>Eukaryota</taxon>
        <taxon>Fungi</taxon>
        <taxon>Fungi incertae sedis</taxon>
        <taxon>Mucoromycota</taxon>
        <taxon>Mucoromycotina</taxon>
        <taxon>Mucoromycetes</taxon>
        <taxon>Mucorales</taxon>
        <taxon>Mucorineae</taxon>
        <taxon>Rhizopodaceae</taxon>
        <taxon>Rhizopus</taxon>
    </lineage>
</organism>
<protein>
    <recommendedName>
        <fullName>Peptidyl-prolyl cis-trans isomerase-like 1</fullName>
        <shortName>PPIase</shortName>
        <ecNumber>5.2.1.8</ecNumber>
    </recommendedName>
    <alternativeName>
        <fullName>Rotamase</fullName>
    </alternativeName>
</protein>
<name>PPIL1_RHIO9</name>
<dbReference type="EC" id="5.2.1.8"/>
<dbReference type="EMBL" id="CH476735">
    <property type="protein sequence ID" value="EIE81191.1"/>
    <property type="status" value="ALT_SEQ"/>
    <property type="molecule type" value="Genomic_DNA"/>
</dbReference>
<dbReference type="SMR" id="P0C1I4"/>
<dbReference type="FunCoup" id="P0C1I4">
    <property type="interactions" value="751"/>
</dbReference>
<dbReference type="STRING" id="246409.P0C1I4"/>
<dbReference type="eggNOG" id="KOG0881">
    <property type="taxonomic scope" value="Eukaryota"/>
</dbReference>
<dbReference type="InParanoid" id="P0C1I4"/>
<dbReference type="OrthoDB" id="73744at4827"/>
<dbReference type="Proteomes" id="UP000009138">
    <property type="component" value="Unassembled WGS sequence"/>
</dbReference>
<dbReference type="GO" id="GO:0071013">
    <property type="term" value="C:catalytic step 2 spliceosome"/>
    <property type="evidence" value="ECO:0007669"/>
    <property type="project" value="TreeGrafter"/>
</dbReference>
<dbReference type="GO" id="GO:0003755">
    <property type="term" value="F:peptidyl-prolyl cis-trans isomerase activity"/>
    <property type="evidence" value="ECO:0007669"/>
    <property type="project" value="UniProtKB-KW"/>
</dbReference>
<dbReference type="GO" id="GO:0006457">
    <property type="term" value="P:protein folding"/>
    <property type="evidence" value="ECO:0007669"/>
    <property type="project" value="InterPro"/>
</dbReference>
<dbReference type="FunFam" id="2.40.100.10:FF:000008">
    <property type="entry name" value="Peptidyl-prolyl cis-trans isomerase"/>
    <property type="match status" value="1"/>
</dbReference>
<dbReference type="Gene3D" id="2.40.100.10">
    <property type="entry name" value="Cyclophilin-like"/>
    <property type="match status" value="1"/>
</dbReference>
<dbReference type="InterPro" id="IPR029000">
    <property type="entry name" value="Cyclophilin-like_dom_sf"/>
</dbReference>
<dbReference type="InterPro" id="IPR024936">
    <property type="entry name" value="Cyclophilin-type_PPIase"/>
</dbReference>
<dbReference type="InterPro" id="IPR020892">
    <property type="entry name" value="Cyclophilin-type_PPIase_CS"/>
</dbReference>
<dbReference type="InterPro" id="IPR002130">
    <property type="entry name" value="Cyclophilin-type_PPIase_dom"/>
</dbReference>
<dbReference type="InterPro" id="IPR044666">
    <property type="entry name" value="Cyclophilin_A-like"/>
</dbReference>
<dbReference type="PANTHER" id="PTHR45625">
    <property type="entry name" value="PEPTIDYL-PROLYL CIS-TRANS ISOMERASE-RELATED"/>
    <property type="match status" value="1"/>
</dbReference>
<dbReference type="PANTHER" id="PTHR45625:SF4">
    <property type="entry name" value="PEPTIDYLPROLYL ISOMERASE DOMAIN AND WD REPEAT-CONTAINING PROTEIN 1"/>
    <property type="match status" value="1"/>
</dbReference>
<dbReference type="Pfam" id="PF00160">
    <property type="entry name" value="Pro_isomerase"/>
    <property type="match status" value="1"/>
</dbReference>
<dbReference type="PIRSF" id="PIRSF001467">
    <property type="entry name" value="Peptidylpro_ismrse"/>
    <property type="match status" value="1"/>
</dbReference>
<dbReference type="PRINTS" id="PR00153">
    <property type="entry name" value="CSAPPISMRASE"/>
</dbReference>
<dbReference type="SUPFAM" id="SSF50891">
    <property type="entry name" value="Cyclophilin-like"/>
    <property type="match status" value="1"/>
</dbReference>
<dbReference type="PROSITE" id="PS00170">
    <property type="entry name" value="CSA_PPIASE_1"/>
    <property type="match status" value="1"/>
</dbReference>
<dbReference type="PROSITE" id="PS50072">
    <property type="entry name" value="CSA_PPIASE_2"/>
    <property type="match status" value="1"/>
</dbReference>
<proteinExistence type="inferred from homology"/>
<accession>P0C1I4</accession>
<accession>I1BYB1</accession>
<reference key="1">
    <citation type="journal article" date="2009" name="PLoS Genet.">
        <title>Genomic analysis of the basal lineage fungus Rhizopus oryzae reveals a whole-genome duplication.</title>
        <authorList>
            <person name="Ma L.-J."/>
            <person name="Ibrahim A.S."/>
            <person name="Skory C."/>
            <person name="Grabherr M.G."/>
            <person name="Burger G."/>
            <person name="Butler M."/>
            <person name="Elias M."/>
            <person name="Idnurm A."/>
            <person name="Lang B.F."/>
            <person name="Sone T."/>
            <person name="Abe A."/>
            <person name="Calvo S.E."/>
            <person name="Corrochano L.M."/>
            <person name="Engels R."/>
            <person name="Fu J."/>
            <person name="Hansberg W."/>
            <person name="Kim J.-M."/>
            <person name="Kodira C.D."/>
            <person name="Koehrsen M.J."/>
            <person name="Liu B."/>
            <person name="Miranda-Saavedra D."/>
            <person name="O'Leary S."/>
            <person name="Ortiz-Castellanos L."/>
            <person name="Poulter R."/>
            <person name="Rodriguez-Romero J."/>
            <person name="Ruiz-Herrera J."/>
            <person name="Shen Y.-Q."/>
            <person name="Zeng Q."/>
            <person name="Galagan J."/>
            <person name="Birren B.W."/>
            <person name="Cuomo C.A."/>
            <person name="Wickes B.L."/>
        </authorList>
    </citation>
    <scope>NUCLEOTIDE SEQUENCE [LARGE SCALE GENOMIC DNA]</scope>
    <source>
        <strain>RA 99-880 / ATCC MYA-4621 / FGSC 9543 / NRRL 43880</strain>
    </source>
</reference>
<reference key="2">
    <citation type="journal article" date="2006" name="BMC Genomics">
        <title>Identification and comparative analysis of sixteen fungal peptidyl-prolyl cis/trans isomerase repertoires.</title>
        <authorList>
            <person name="Pemberton T.J."/>
        </authorList>
    </citation>
    <scope>REVISION OF GENE MODEL</scope>
</reference>
<evidence type="ECO:0000250" key="1"/>
<evidence type="ECO:0000255" key="2">
    <source>
        <dbReference type="PROSITE-ProRule" id="PRU00156"/>
    </source>
</evidence>
<evidence type="ECO:0000305" key="3"/>
<gene>
    <name type="primary">cyp3</name>
    <name type="ORF">RO3G_05896</name>
</gene>
<sequence length="165" mass="18257">MSEREEVILDTSMGSIHIELYWDHAPRTCKNFYELAKRGYYDGVSFHRIIADFMIQGGDPTGTGRGGTSIYGERFADEINPGLQHTGAGILSMANAGPNTNGSQFFITLAPTPWLDGKHTIFGRVSDGMNVVKRMGLVKTDANDRLFIVQKILYALNAVDLNKEL</sequence>
<comment type="function">
    <text evidence="1">PPIases accelerate the folding of proteins. It catalyzes the cis-trans isomerization of proline imidic peptide bonds in oligopeptides (By similarity).</text>
</comment>
<comment type="catalytic activity">
    <reaction>
        <text>[protein]-peptidylproline (omega=180) = [protein]-peptidylproline (omega=0)</text>
        <dbReference type="Rhea" id="RHEA:16237"/>
        <dbReference type="Rhea" id="RHEA-COMP:10747"/>
        <dbReference type="Rhea" id="RHEA-COMP:10748"/>
        <dbReference type="ChEBI" id="CHEBI:83833"/>
        <dbReference type="ChEBI" id="CHEBI:83834"/>
        <dbReference type="EC" id="5.2.1.8"/>
    </reaction>
</comment>
<comment type="similarity">
    <text evidence="3">Belongs to the cyclophilin-type PPIase family. PPIL1 subfamily.</text>
</comment>
<comment type="sequence caution" evidence="3">
    <conflict type="erroneous gene model prediction">
        <sequence resource="EMBL-CDS" id="EIE81191"/>
    </conflict>
</comment>
<feature type="chain" id="PRO_0000244717" description="Peptidyl-prolyl cis-trans isomerase-like 1">
    <location>
        <begin position="1"/>
        <end position="165"/>
    </location>
</feature>
<feature type="domain" description="PPIase cyclophilin-type" evidence="2">
    <location>
        <begin position="3"/>
        <end position="157"/>
    </location>
</feature>